<protein>
    <recommendedName>
        <fullName evidence="1">Maturase K</fullName>
    </recommendedName>
    <alternativeName>
        <fullName evidence="1">Intron maturase</fullName>
    </alternativeName>
</protein>
<comment type="function">
    <text evidence="1">Usually encoded in the trnK tRNA gene intron. Probably assists in splicing its own and other chloroplast group II introns.</text>
</comment>
<comment type="subcellular location">
    <subcellularLocation>
        <location>Plastid</location>
        <location>Chloroplast</location>
    </subcellularLocation>
</comment>
<comment type="similarity">
    <text evidence="1">Belongs to the intron maturase 2 family. MatK subfamily.</text>
</comment>
<gene>
    <name evidence="1" type="primary">matK</name>
</gene>
<reference key="1">
    <citation type="journal article" date="2002" name="Syst. Bot.">
        <title>Phylogeny and systematics of Lemnaceae, the duckweed family.</title>
        <authorList>
            <person name="Les D.H."/>
            <person name="Crawford D.J."/>
            <person name="Landolt E."/>
            <person name="Gabel J.D."/>
            <person name="Kimball R.T."/>
        </authorList>
        <dbReference type="AGRICOLA" id="IND23289763"/>
    </citation>
    <scope>NUCLEOTIDE SEQUENCE [GENOMIC DNA]</scope>
</reference>
<sequence length="508" mass="60198">MEEFKGYLQKGGLKQQHFLYPLLFKEYIYALAYDQGLNASTFNEPDDISGYDKKYSSLLVKRLIKRLYQQNSLIRSVNKDKQTRFVGHNKNFYYQMVSEGFAIVLEIPLSLRLVSSLKEKKDIPKYQNLRSIHSIFSFLEDKFPHLHYISDILLPYPVHLEKLIQILQCWIHDGPTLHLLRLFFHDYHNWSNCITTKKSSYGFSKENPSLYRFLYNSYVVEAESIFVFLRKSSSYLRSTSFGPLLERTHFYGKMKHIGVTRCNDFQKPLGLFKDPMMHYVRYQSKVLIASRGTYLLLKKWKSYFMNLWQCHFDFWSEPSRIHINQFPKFSFYFLGYLSSIEMTPSSIKSQMLENYFLIDTVTPKFQTIIAISPIIGSLARARFCNLSGNPISKPVWTDLSDSEIIDRFGRLCRNLSHYYSGSSKKQSLYRIKYILRLSCARTLARKHKTTVRTFLQKLGSEFFEEFFMEEEKVLSLMLSRTSNPLHQLYREPIWFLDIIRLNDLVNHL</sequence>
<accession>Q8WHJ9</accession>
<evidence type="ECO:0000255" key="1">
    <source>
        <dbReference type="HAMAP-Rule" id="MF_01390"/>
    </source>
</evidence>
<proteinExistence type="inferred from homology"/>
<name>MATK_WOLAR</name>
<geneLocation type="chloroplast"/>
<organism>
    <name type="scientific">Wolffia arrhiza</name>
    <name type="common">Rootless water-meal</name>
    <name type="synonym">Lemna arrhiza</name>
    <dbReference type="NCBI Taxonomy" id="161111"/>
    <lineage>
        <taxon>Eukaryota</taxon>
        <taxon>Viridiplantae</taxon>
        <taxon>Streptophyta</taxon>
        <taxon>Embryophyta</taxon>
        <taxon>Tracheophyta</taxon>
        <taxon>Spermatophyta</taxon>
        <taxon>Magnoliopsida</taxon>
        <taxon>Liliopsida</taxon>
        <taxon>Araceae</taxon>
        <taxon>Lemnoideae</taxon>
        <taxon>Wolffia</taxon>
    </lineage>
</organism>
<feature type="chain" id="PRO_0000143791" description="Maturase K">
    <location>
        <begin position="1"/>
        <end position="508"/>
    </location>
</feature>
<dbReference type="EMBL" id="AY034216">
    <property type="protein sequence ID" value="AAK61587.1"/>
    <property type="molecule type" value="Genomic_DNA"/>
</dbReference>
<dbReference type="GO" id="GO:0009507">
    <property type="term" value="C:chloroplast"/>
    <property type="evidence" value="ECO:0007669"/>
    <property type="project" value="UniProtKB-SubCell"/>
</dbReference>
<dbReference type="GO" id="GO:0003723">
    <property type="term" value="F:RNA binding"/>
    <property type="evidence" value="ECO:0007669"/>
    <property type="project" value="UniProtKB-KW"/>
</dbReference>
<dbReference type="GO" id="GO:0006397">
    <property type="term" value="P:mRNA processing"/>
    <property type="evidence" value="ECO:0007669"/>
    <property type="project" value="UniProtKB-KW"/>
</dbReference>
<dbReference type="GO" id="GO:0008380">
    <property type="term" value="P:RNA splicing"/>
    <property type="evidence" value="ECO:0007669"/>
    <property type="project" value="UniProtKB-UniRule"/>
</dbReference>
<dbReference type="GO" id="GO:0008033">
    <property type="term" value="P:tRNA processing"/>
    <property type="evidence" value="ECO:0007669"/>
    <property type="project" value="UniProtKB-KW"/>
</dbReference>
<dbReference type="HAMAP" id="MF_01390">
    <property type="entry name" value="MatK"/>
    <property type="match status" value="1"/>
</dbReference>
<dbReference type="InterPro" id="IPR024937">
    <property type="entry name" value="Domain_X"/>
</dbReference>
<dbReference type="InterPro" id="IPR002866">
    <property type="entry name" value="Maturase_MatK"/>
</dbReference>
<dbReference type="InterPro" id="IPR024942">
    <property type="entry name" value="Maturase_MatK_N"/>
</dbReference>
<dbReference type="PANTHER" id="PTHR34811">
    <property type="entry name" value="MATURASE K"/>
    <property type="match status" value="1"/>
</dbReference>
<dbReference type="PANTHER" id="PTHR34811:SF1">
    <property type="entry name" value="MATURASE K"/>
    <property type="match status" value="1"/>
</dbReference>
<dbReference type="Pfam" id="PF01348">
    <property type="entry name" value="Intron_maturas2"/>
    <property type="match status" value="1"/>
</dbReference>
<dbReference type="Pfam" id="PF01824">
    <property type="entry name" value="MatK_N"/>
    <property type="match status" value="1"/>
</dbReference>
<keyword id="KW-0150">Chloroplast</keyword>
<keyword id="KW-0507">mRNA processing</keyword>
<keyword id="KW-0934">Plastid</keyword>
<keyword id="KW-0694">RNA-binding</keyword>
<keyword id="KW-0819">tRNA processing</keyword>